<name>EX1_HAEIN</name>
<reference key="1">
    <citation type="journal article" date="1995" name="Science">
        <title>Whole-genome random sequencing and assembly of Haemophilus influenzae Rd.</title>
        <authorList>
            <person name="Fleischmann R.D."/>
            <person name="Adams M.D."/>
            <person name="White O."/>
            <person name="Clayton R.A."/>
            <person name="Kirkness E.F."/>
            <person name="Kerlavage A.R."/>
            <person name="Bult C.J."/>
            <person name="Tomb J.-F."/>
            <person name="Dougherty B.A."/>
            <person name="Merrick J.M."/>
            <person name="McKenney K."/>
            <person name="Sutton G.G."/>
            <person name="FitzHugh W."/>
            <person name="Fields C.A."/>
            <person name="Gocayne J.D."/>
            <person name="Scott J.D."/>
            <person name="Shirley R."/>
            <person name="Liu L.-I."/>
            <person name="Glodek A."/>
            <person name="Kelley J.M."/>
            <person name="Weidman J.F."/>
            <person name="Phillips C.A."/>
            <person name="Spriggs T."/>
            <person name="Hedblom E."/>
            <person name="Cotton M.D."/>
            <person name="Utterback T.R."/>
            <person name="Hanna M.C."/>
            <person name="Nguyen D.T."/>
            <person name="Saudek D.M."/>
            <person name="Brandon R.C."/>
            <person name="Fine L.D."/>
            <person name="Fritchman J.L."/>
            <person name="Fuhrmann J.L."/>
            <person name="Geoghagen N.S.M."/>
            <person name="Gnehm C.L."/>
            <person name="McDonald L.A."/>
            <person name="Small K.V."/>
            <person name="Fraser C.M."/>
            <person name="Smith H.O."/>
            <person name="Venter J.C."/>
        </authorList>
    </citation>
    <scope>NUCLEOTIDE SEQUENCE [LARGE SCALE GENOMIC DNA]</scope>
    <source>
        <strain>ATCC 51907 / DSM 11121 / KW20 / Rd</strain>
    </source>
</reference>
<reference key="2">
    <citation type="journal article" date="2008" name="Mutat. Res.">
        <title>RecJ, ExoI and RecG are required for genome maintenance but not for generation of genetic diversity by repeat-mediated phase variation in Haemophilus influenzae.</title>
        <authorList>
            <person name="Kumar G.A."/>
            <person name="Woodhall M.R."/>
            <person name="Hood D.W."/>
            <person name="Moxon E.R."/>
            <person name="Bayliss C.D."/>
        </authorList>
    </citation>
    <scope>FUNCTION</scope>
    <scope>DISRUPTION PHENOTYPE</scope>
    <source>
        <strain>ATCC 51907 / DSM 11121 / KW20 / Rd</strain>
    </source>
</reference>
<proteinExistence type="inferred from homology"/>
<keyword id="KW-0227">DNA damage</keyword>
<keyword id="KW-0234">DNA repair</keyword>
<keyword id="KW-0238">DNA-binding</keyword>
<keyword id="KW-0269">Exonuclease</keyword>
<keyword id="KW-0378">Hydrolase</keyword>
<keyword id="KW-0460">Magnesium</keyword>
<keyword id="KW-0479">Metal-binding</keyword>
<keyword id="KW-0540">Nuclease</keyword>
<keyword id="KW-1185">Reference proteome</keyword>
<comment type="function">
    <text evidence="1 5">Degrades single-stranded DNA (ssDNA) in a highly processive manner. Also functions as a DNA deoxyribophosphodiesterase that releases deoxyribose-phosphate moieties following the cleavage of DNA at an apurinic/apyrimidinic (AP) site by either an AP endonuclease or AP lyase (By similarity). Involved in genome maintenance but probably not in phase variation, which contributes to the virulence and disease (PubMed:18242643).</text>
</comment>
<comment type="catalytic activity">
    <reaction evidence="1">
        <text>Exonucleolytic cleavage in the 3'- to 5'-direction to yield nucleoside 5'-phosphates.</text>
        <dbReference type="EC" id="3.1.11.1"/>
    </reaction>
</comment>
<comment type="cofactor">
    <cofactor evidence="1">
        <name>Mg(2+)</name>
        <dbReference type="ChEBI" id="CHEBI:18420"/>
    </cofactor>
    <text evidence="1">Binds 2 Mg(2+) ions per monomer.</text>
</comment>
<comment type="subunit">
    <text evidence="1">Monomer. Interacts with ssb (via C-terminus); this interaction stimulates the exonuclease activity by recruiting the enzyme to its substrate.</text>
</comment>
<comment type="domain">
    <text evidence="1">The N-terminal exonuclease domain and the exonuclease C-terminal domain form a central positively charged groove which binds the DNA.</text>
</comment>
<comment type="disruption phenotype">
    <text evidence="5">No visible growth phenotype in rich media, no change in UV or mitomycin C sensitivity, no change in the spontaneous mutation rate, no change in the rates of slippage in tetranucleotide repeat tracts (i.e. phase variation) (PubMed:18242643). A double exoI-recJ deletion strain has a 2.5-fold increase in spontaneous mutations (PubMed:18242643).</text>
</comment>
<sequence length="473" mass="54388">MVKDFSFFIYDYESFGVNPATDRPAQFAGIRTDADFNIIGEPIMFYCKQTNDYLPAPEAVMVTGITPQECNEKGLSEPEFAANILAEFSQPNTCVMGYNNIRYDDEMTRYTFYRNFIEPYEYSWKNGNSRWDLLDLVRACYALRPEGINWAYDDDGMPSFRLEKLTKANSIEHENAHDAMADVYATIAMAKLIKEKQPKLFQYFFENRGKKEIEKLVDTGAMTPLVHVSGMLGNYRGNCTWVAPLAWHPTNQNALIVCDLTGDIDNLLAKSADELRADLYTKKLELEERGVSSVPLKLVHINKCPILAPAKTLLPETANRLGIDRQLCLDNLAKLRASFDIREKVADIFNEERQFASNDNVETELYNGFFSNADKNNMAILRSLPAEKLSEHGLAFEDKRILELLFHYRARHFYKTLTRAEQIKWKKYRQNKLEKSAVEFEASLQRLVEXHSDNSEKLSLLQQVYEYGIKLLG</sequence>
<gene>
    <name type="primary">sbcB</name>
    <name type="ordered locus">HI_1377</name>
</gene>
<organism>
    <name type="scientific">Haemophilus influenzae (strain ATCC 51907 / DSM 11121 / KW20 / Rd)</name>
    <dbReference type="NCBI Taxonomy" id="71421"/>
    <lineage>
        <taxon>Bacteria</taxon>
        <taxon>Pseudomonadati</taxon>
        <taxon>Pseudomonadota</taxon>
        <taxon>Gammaproteobacteria</taxon>
        <taxon>Pasteurellales</taxon>
        <taxon>Pasteurellaceae</taxon>
        <taxon>Haemophilus</taxon>
    </lineage>
</organism>
<evidence type="ECO:0000250" key="1">
    <source>
        <dbReference type="UniProtKB" id="P04995"/>
    </source>
</evidence>
<evidence type="ECO:0000255" key="2"/>
<evidence type="ECO:0000255" key="3">
    <source>
        <dbReference type="PROSITE-ProRule" id="PRU01120"/>
    </source>
</evidence>
<evidence type="ECO:0000255" key="4">
    <source>
        <dbReference type="PROSITE-ProRule" id="PRU01121"/>
    </source>
</evidence>
<evidence type="ECO:0000269" key="5">
    <source>
    </source>
</evidence>
<dbReference type="EC" id="3.1.11.1" evidence="1"/>
<dbReference type="EMBL" id="L42023">
    <property type="protein sequence ID" value="AAC23023.1"/>
    <property type="molecule type" value="Genomic_DNA"/>
</dbReference>
<dbReference type="PIR" id="E64120">
    <property type="entry name" value="E64120"/>
</dbReference>
<dbReference type="RefSeq" id="NP_439529.1">
    <property type="nucleotide sequence ID" value="NC_000907.1"/>
</dbReference>
<dbReference type="STRING" id="71421.HI_1377"/>
<dbReference type="EnsemblBacteria" id="AAC23023">
    <property type="protein sequence ID" value="AAC23023"/>
    <property type="gene ID" value="HI_1377"/>
</dbReference>
<dbReference type="KEGG" id="hin:HI_1377"/>
<dbReference type="PATRIC" id="fig|71421.8.peg.1432"/>
<dbReference type="eggNOG" id="COG2925">
    <property type="taxonomic scope" value="Bacteria"/>
</dbReference>
<dbReference type="HOGENOM" id="CLU_043508_1_1_6"/>
<dbReference type="OrthoDB" id="9763470at2"/>
<dbReference type="PhylomeDB" id="P45188"/>
<dbReference type="BioCyc" id="HINF71421:G1GJ1-1403-MONOMER"/>
<dbReference type="Proteomes" id="UP000000579">
    <property type="component" value="Chromosome"/>
</dbReference>
<dbReference type="GO" id="GO:0000175">
    <property type="term" value="F:3'-5'-RNA exonuclease activity"/>
    <property type="evidence" value="ECO:0007669"/>
    <property type="project" value="InterPro"/>
</dbReference>
<dbReference type="GO" id="GO:0051575">
    <property type="term" value="F:5'-deoxyribose-5-phosphate lyase activity"/>
    <property type="evidence" value="ECO:0000250"/>
    <property type="project" value="UniProtKB"/>
</dbReference>
<dbReference type="GO" id="GO:0000287">
    <property type="term" value="F:magnesium ion binding"/>
    <property type="evidence" value="ECO:0000250"/>
    <property type="project" value="UniProtKB"/>
</dbReference>
<dbReference type="GO" id="GO:0008310">
    <property type="term" value="F:single-stranded DNA 3'-5' DNA exonuclease activity"/>
    <property type="evidence" value="ECO:0000250"/>
    <property type="project" value="UniProtKB"/>
</dbReference>
<dbReference type="GO" id="GO:0003697">
    <property type="term" value="F:single-stranded DNA binding"/>
    <property type="evidence" value="ECO:0000250"/>
    <property type="project" value="UniProtKB"/>
</dbReference>
<dbReference type="GO" id="GO:0006308">
    <property type="term" value="P:DNA catabolic process"/>
    <property type="evidence" value="ECO:0000250"/>
    <property type="project" value="UniProtKB"/>
</dbReference>
<dbReference type="GO" id="GO:0006281">
    <property type="term" value="P:DNA repair"/>
    <property type="evidence" value="ECO:0007669"/>
    <property type="project" value="UniProtKB-KW"/>
</dbReference>
<dbReference type="CDD" id="cd06138">
    <property type="entry name" value="ExoI_N"/>
    <property type="match status" value="1"/>
</dbReference>
<dbReference type="FunFam" id="1.20.1280.70:FF:000001">
    <property type="entry name" value="Exodeoxyribonuclease I"/>
    <property type="match status" value="1"/>
</dbReference>
<dbReference type="FunFam" id="3.30.1520.20:FF:000001">
    <property type="entry name" value="Exodeoxyribonuclease I"/>
    <property type="match status" value="1"/>
</dbReference>
<dbReference type="FunFam" id="3.30.420.10:FF:000033">
    <property type="entry name" value="Exodeoxyribonuclease I"/>
    <property type="match status" value="1"/>
</dbReference>
<dbReference type="Gene3D" id="1.10.287.1240">
    <property type="match status" value="1"/>
</dbReference>
<dbReference type="Gene3D" id="3.30.1520.20">
    <property type="entry name" value="Exonuclease ExoI, domain 2"/>
    <property type="match status" value="1"/>
</dbReference>
<dbReference type="Gene3D" id="1.20.1280.70">
    <property type="entry name" value="Exonuclease ExoI, domain 3"/>
    <property type="match status" value="1"/>
</dbReference>
<dbReference type="Gene3D" id="3.30.420.10">
    <property type="entry name" value="Ribonuclease H-like superfamily/Ribonuclease H"/>
    <property type="match status" value="1"/>
</dbReference>
<dbReference type="InterPro" id="IPR023607">
    <property type="entry name" value="Exodeoxyribonuclease_I"/>
</dbReference>
<dbReference type="InterPro" id="IPR034748">
    <property type="entry name" value="EXOI_C"/>
</dbReference>
<dbReference type="InterPro" id="IPR034747">
    <property type="entry name" value="EXOI_SH3"/>
</dbReference>
<dbReference type="InterPro" id="IPR038649">
    <property type="entry name" value="EXOI_SH3_sf"/>
</dbReference>
<dbReference type="InterPro" id="IPR013620">
    <property type="entry name" value="Exonuc_1_C"/>
</dbReference>
<dbReference type="InterPro" id="IPR013520">
    <property type="entry name" value="Exonuclease_RNaseT/DNA_pol3"/>
</dbReference>
<dbReference type="InterPro" id="IPR022894">
    <property type="entry name" value="Oligoribonuclease"/>
</dbReference>
<dbReference type="InterPro" id="IPR012337">
    <property type="entry name" value="RNaseH-like_sf"/>
</dbReference>
<dbReference type="InterPro" id="IPR036397">
    <property type="entry name" value="RNaseH_sf"/>
</dbReference>
<dbReference type="NCBIfam" id="NF008746">
    <property type="entry name" value="PRK11779.1"/>
    <property type="match status" value="1"/>
</dbReference>
<dbReference type="PANTHER" id="PTHR11046:SF11">
    <property type="entry name" value="EXODEOXYRIBONUCLEASE I"/>
    <property type="match status" value="1"/>
</dbReference>
<dbReference type="PANTHER" id="PTHR11046">
    <property type="entry name" value="OLIGORIBONUCLEASE, MITOCHONDRIAL"/>
    <property type="match status" value="1"/>
</dbReference>
<dbReference type="Pfam" id="PF08411">
    <property type="entry name" value="Exonuc_X-T_C"/>
    <property type="match status" value="1"/>
</dbReference>
<dbReference type="Pfam" id="PF00929">
    <property type="entry name" value="RNase_T"/>
    <property type="match status" value="1"/>
</dbReference>
<dbReference type="PIRSF" id="PIRSF000977">
    <property type="entry name" value="Exodeoxyribonuclease_I"/>
    <property type="match status" value="1"/>
</dbReference>
<dbReference type="SUPFAM" id="SSF53098">
    <property type="entry name" value="Ribonuclease H-like"/>
    <property type="match status" value="1"/>
</dbReference>
<dbReference type="PROSITE" id="PS51785">
    <property type="entry name" value="EXOI_C"/>
    <property type="match status" value="1"/>
</dbReference>
<dbReference type="PROSITE" id="PS51784">
    <property type="entry name" value="EXOI_SH3"/>
    <property type="match status" value="1"/>
</dbReference>
<protein>
    <recommendedName>
        <fullName>Exodeoxyribonuclease I</fullName>
        <shortName>ExoI</shortName>
        <shortName>Exonuclease I</shortName>
        <ecNumber evidence="1">3.1.11.1</ecNumber>
    </recommendedName>
    <alternativeName>
        <fullName>DNA deoxyribophosphodiesterase</fullName>
        <shortName>dRPase</shortName>
    </alternativeName>
</protein>
<feature type="chain" id="PRO_0000087111" description="Exodeoxyribonuclease I">
    <location>
        <begin position="1"/>
        <end position="473"/>
    </location>
</feature>
<feature type="domain" description="Exonuclease" evidence="2">
    <location>
        <begin position="9"/>
        <end position="188"/>
    </location>
</feature>
<feature type="domain" description="ExoI SH3-like" evidence="3">
    <location>
        <begin position="198"/>
        <end position="353"/>
    </location>
</feature>
<feature type="domain" description="ExoI C-terminal" evidence="4">
    <location>
        <begin position="356"/>
        <end position="472"/>
    </location>
</feature>
<feature type="binding site" evidence="1">
    <location>
        <position position="11"/>
    </location>
    <ligand>
        <name>Mg(2+)</name>
        <dbReference type="ChEBI" id="CHEBI:18420"/>
        <label>1</label>
    </ligand>
</feature>
<feature type="binding site" evidence="1">
    <location>
        <position position="13"/>
    </location>
    <ligand>
        <name>Mg(2+)</name>
        <dbReference type="ChEBI" id="CHEBI:18420"/>
        <label>2</label>
    </ligand>
</feature>
<feature type="binding site" evidence="1">
    <location>
        <position position="13"/>
    </location>
    <ligand>
        <name>substrate</name>
    </ligand>
</feature>
<feature type="binding site" evidence="1">
    <location>
        <position position="182"/>
    </location>
    <ligand>
        <name>Mg(2+)</name>
        <dbReference type="ChEBI" id="CHEBI:18420"/>
        <label>2</label>
    </ligand>
</feature>
<feature type="site" description="Interaction with single-stranded DNA" evidence="1">
    <location>
        <position position="109"/>
    </location>
</feature>
<feature type="site" description="Interaction with single-stranded DNA" evidence="1">
    <location>
        <position position="120"/>
    </location>
</feature>
<feature type="site" description="Interaction with single-stranded DNA" evidence="1">
    <location>
        <position position="124"/>
    </location>
</feature>
<feature type="site" description="Interaction with single-stranded DNA" evidence="1">
    <location>
        <position position="138"/>
    </location>
</feature>
<feature type="site" description="Important for interaction with ssb" evidence="1">
    <location>
        <position position="144"/>
    </location>
</feature>
<feature type="site" description="Important for activity" evidence="1">
    <location>
        <position position="177"/>
    </location>
</feature>
<feature type="site" description="Interaction with single-stranded DNA" evidence="1">
    <location>
        <position position="210"/>
    </location>
</feature>
<feature type="site" description="Interaction with single-stranded DNA" evidence="1">
    <location>
        <position position="253"/>
    </location>
</feature>
<feature type="site" description="Interaction with single-stranded DNA" evidence="1">
    <location>
        <position position="302"/>
    </location>
</feature>
<feature type="site" description="Interaction with single-stranded DNA" evidence="1">
    <location>
        <position position="366"/>
    </location>
</feature>
<feature type="site" description="Interaction with single-stranded DNA" evidence="1">
    <location>
        <position position="369"/>
    </location>
</feature>
<accession>P45188</accession>